<keyword id="KW-0963">Cytoplasm</keyword>
<keyword id="KW-0251">Elongation factor</keyword>
<keyword id="KW-0342">GTP-binding</keyword>
<keyword id="KW-0547">Nucleotide-binding</keyword>
<keyword id="KW-0597">Phosphoprotein</keyword>
<keyword id="KW-0648">Protein biosynthesis</keyword>
<keyword id="KW-1185">Reference proteome</keyword>
<accession>P29520</accession>
<evidence type="ECO:0000250" key="1"/>
<evidence type="ECO:0000305" key="2"/>
<proteinExistence type="evidence at transcript level"/>
<protein>
    <recommendedName>
        <fullName>Elongation factor 1-alpha</fullName>
        <shortName>EF-1-alpha</shortName>
    </recommendedName>
</protein>
<name>EF1A_BOMMO</name>
<comment type="function">
    <text>This protein promotes the GTP-dependent binding of aminoacyl-tRNA to the A-site of ribosomes during protein biosynthesis.</text>
</comment>
<comment type="subcellular location">
    <subcellularLocation>
        <location>Cytoplasm</location>
    </subcellularLocation>
</comment>
<comment type="similarity">
    <text evidence="2">Belongs to the TRAFAC class translation factor GTPase superfamily. Classic translation factor GTPase family. EF-Tu/EF-1A subfamily.</text>
</comment>
<dbReference type="EMBL" id="D13338">
    <property type="protein sequence ID" value="BAA02601.1"/>
    <property type="molecule type" value="mRNA"/>
</dbReference>
<dbReference type="PIR" id="S35513">
    <property type="entry name" value="S35513"/>
</dbReference>
<dbReference type="RefSeq" id="NP_001037510.1">
    <property type="nucleotide sequence ID" value="NM_001044045.1"/>
</dbReference>
<dbReference type="SMR" id="P29520"/>
<dbReference type="FunCoup" id="P29520">
    <property type="interactions" value="764"/>
</dbReference>
<dbReference type="STRING" id="7091.P29520"/>
<dbReference type="PaxDb" id="7091-BGIBMGA003608-TA"/>
<dbReference type="EnsemblMetazoa" id="NM_001044045.1">
    <property type="protein sequence ID" value="NP_001037510.1"/>
    <property type="gene ID" value="GeneID_693059"/>
</dbReference>
<dbReference type="GeneID" id="693059"/>
<dbReference type="KEGG" id="bmor:693059"/>
<dbReference type="CTD" id="36271"/>
<dbReference type="eggNOG" id="KOG0052">
    <property type="taxonomic scope" value="Eukaryota"/>
</dbReference>
<dbReference type="HOGENOM" id="CLU_007265_3_5_1"/>
<dbReference type="InParanoid" id="P29520"/>
<dbReference type="OrthoDB" id="173501at7088"/>
<dbReference type="Proteomes" id="UP000005204">
    <property type="component" value="Unassembled WGS sequence"/>
</dbReference>
<dbReference type="GO" id="GO:0005737">
    <property type="term" value="C:cytoplasm"/>
    <property type="evidence" value="ECO:0007669"/>
    <property type="project" value="UniProtKB-SubCell"/>
</dbReference>
<dbReference type="GO" id="GO:0005525">
    <property type="term" value="F:GTP binding"/>
    <property type="evidence" value="ECO:0007669"/>
    <property type="project" value="UniProtKB-KW"/>
</dbReference>
<dbReference type="GO" id="GO:0003924">
    <property type="term" value="F:GTPase activity"/>
    <property type="evidence" value="ECO:0007669"/>
    <property type="project" value="InterPro"/>
</dbReference>
<dbReference type="GO" id="GO:0003746">
    <property type="term" value="F:translation elongation factor activity"/>
    <property type="evidence" value="ECO:0007669"/>
    <property type="project" value="UniProtKB-KW"/>
</dbReference>
<dbReference type="CDD" id="cd01883">
    <property type="entry name" value="EF1_alpha"/>
    <property type="match status" value="1"/>
</dbReference>
<dbReference type="CDD" id="cd03693">
    <property type="entry name" value="EF1_alpha_II"/>
    <property type="match status" value="1"/>
</dbReference>
<dbReference type="CDD" id="cd03705">
    <property type="entry name" value="EF1_alpha_III"/>
    <property type="match status" value="1"/>
</dbReference>
<dbReference type="FunFam" id="2.40.30.10:FF:000003">
    <property type="entry name" value="Elongation factor 1-alpha"/>
    <property type="match status" value="1"/>
</dbReference>
<dbReference type="FunFam" id="2.40.30.10:FF:000005">
    <property type="entry name" value="Elongation factor 1-alpha"/>
    <property type="match status" value="1"/>
</dbReference>
<dbReference type="FunFam" id="3.40.50.300:FF:000090">
    <property type="entry name" value="Elongation factor 1-alpha"/>
    <property type="match status" value="1"/>
</dbReference>
<dbReference type="Gene3D" id="3.40.50.300">
    <property type="entry name" value="P-loop containing nucleotide triphosphate hydrolases"/>
    <property type="match status" value="1"/>
</dbReference>
<dbReference type="Gene3D" id="2.40.30.10">
    <property type="entry name" value="Translation factors"/>
    <property type="match status" value="2"/>
</dbReference>
<dbReference type="HAMAP" id="MF_00118_A">
    <property type="entry name" value="EF_Tu_A"/>
    <property type="match status" value="1"/>
</dbReference>
<dbReference type="InterPro" id="IPR004161">
    <property type="entry name" value="EFTu-like_2"/>
</dbReference>
<dbReference type="InterPro" id="IPR031157">
    <property type="entry name" value="G_TR_CS"/>
</dbReference>
<dbReference type="InterPro" id="IPR054696">
    <property type="entry name" value="GTP-eEF1A_C"/>
</dbReference>
<dbReference type="InterPro" id="IPR027417">
    <property type="entry name" value="P-loop_NTPase"/>
</dbReference>
<dbReference type="InterPro" id="IPR000795">
    <property type="entry name" value="T_Tr_GTP-bd_dom"/>
</dbReference>
<dbReference type="InterPro" id="IPR050100">
    <property type="entry name" value="TRAFAC_GTPase_members"/>
</dbReference>
<dbReference type="InterPro" id="IPR009000">
    <property type="entry name" value="Transl_B-barrel_sf"/>
</dbReference>
<dbReference type="InterPro" id="IPR009001">
    <property type="entry name" value="Transl_elong_EF1A/Init_IF2_C"/>
</dbReference>
<dbReference type="InterPro" id="IPR004539">
    <property type="entry name" value="Transl_elong_EF1A_euk/arc"/>
</dbReference>
<dbReference type="NCBIfam" id="TIGR00483">
    <property type="entry name" value="EF-1_alpha"/>
    <property type="match status" value="1"/>
</dbReference>
<dbReference type="NCBIfam" id="NF008969">
    <property type="entry name" value="PRK12317.1"/>
    <property type="match status" value="1"/>
</dbReference>
<dbReference type="PANTHER" id="PTHR23115">
    <property type="entry name" value="TRANSLATION FACTOR"/>
    <property type="match status" value="1"/>
</dbReference>
<dbReference type="Pfam" id="PF22594">
    <property type="entry name" value="GTP-eEF1A_C"/>
    <property type="match status" value="1"/>
</dbReference>
<dbReference type="Pfam" id="PF00009">
    <property type="entry name" value="GTP_EFTU"/>
    <property type="match status" value="1"/>
</dbReference>
<dbReference type="Pfam" id="PF03144">
    <property type="entry name" value="GTP_EFTU_D2"/>
    <property type="match status" value="1"/>
</dbReference>
<dbReference type="PRINTS" id="PR00315">
    <property type="entry name" value="ELONGATNFCT"/>
</dbReference>
<dbReference type="SUPFAM" id="SSF50465">
    <property type="entry name" value="EF-Tu/eEF-1alpha/eIF2-gamma C-terminal domain"/>
    <property type="match status" value="1"/>
</dbReference>
<dbReference type="SUPFAM" id="SSF52540">
    <property type="entry name" value="P-loop containing nucleoside triphosphate hydrolases"/>
    <property type="match status" value="1"/>
</dbReference>
<dbReference type="SUPFAM" id="SSF50447">
    <property type="entry name" value="Translation proteins"/>
    <property type="match status" value="1"/>
</dbReference>
<dbReference type="PROSITE" id="PS00301">
    <property type="entry name" value="G_TR_1"/>
    <property type="match status" value="1"/>
</dbReference>
<dbReference type="PROSITE" id="PS51722">
    <property type="entry name" value="G_TR_2"/>
    <property type="match status" value="1"/>
</dbReference>
<reference key="1">
    <citation type="journal article" date="1993" name="Nucleic Acids Res.">
        <title>Nucleotide sequence of the cDNA encoding silk gland elongation factor 1 alpha.</title>
        <authorList>
            <person name="Kamiie K."/>
            <person name="Taira H."/>
            <person name="Ooura H."/>
            <person name="Matsumoto S."/>
            <person name="Ejiri S."/>
            <person name="Katsumata T."/>
        </authorList>
    </citation>
    <scope>NUCLEOTIDE SEQUENCE [MRNA]</scope>
</reference>
<sequence length="463" mass="50372">MGKEKTHINIVVIGHVDSGKSTTTGHLIYKCGGIDKRTIEKFEKEAQEMGKGSFKYAWVLDKLKAERERGITIDIALWKFETSKYYVTIIDAPGHRDFIKNMITGTSQADCAVLIVAAGTGEFEAGISKNGQTREHALLAFTLGVKQLIVGVNKMDSTEPPYSEPRFEEIKKEVSSYIKKIGYNPAAVAFVPISGWHGDNMLEPSTKMPWFKGWQVERKEGKADGKSLIEALDAILPPARPTDKPLRLPLQDVYKIGGIGTVPVGRVETGVLKPGTIVVFAPANITTEVKSVEMHHEALQEAVPGDNVGFNVKNVSVKELRRGYVAGDSKNNPPKGAADFTAQVIVLNHPGQISNGYTPVLDCHTAHIACKFAEIKEKVDRRTGKSTEVNPKSIKSGDAAIVNLVPSKPLCVESFQEFPPLGRFAVRDMRQTVAVGVIKAVNFKEAGGGKVTKAAEKATKGKK</sequence>
<feature type="chain" id="PRO_0000090905" description="Elongation factor 1-alpha">
    <location>
        <begin position="1"/>
        <end position="463"/>
    </location>
</feature>
<feature type="domain" description="tr-type G">
    <location>
        <begin position="5"/>
        <end position="242"/>
    </location>
</feature>
<feature type="region of interest" description="G1" evidence="1">
    <location>
        <begin position="14"/>
        <end position="21"/>
    </location>
</feature>
<feature type="region of interest" description="G2" evidence="1">
    <location>
        <begin position="70"/>
        <end position="74"/>
    </location>
</feature>
<feature type="region of interest" description="G3" evidence="1">
    <location>
        <begin position="91"/>
        <end position="94"/>
    </location>
</feature>
<feature type="region of interest" description="G4" evidence="1">
    <location>
        <begin position="153"/>
        <end position="156"/>
    </location>
</feature>
<feature type="region of interest" description="G5" evidence="1">
    <location>
        <begin position="194"/>
        <end position="196"/>
    </location>
</feature>
<feature type="binding site" evidence="1">
    <location>
        <begin position="14"/>
        <end position="21"/>
    </location>
    <ligand>
        <name>GTP</name>
        <dbReference type="ChEBI" id="CHEBI:37565"/>
    </ligand>
</feature>
<feature type="binding site" evidence="1">
    <location>
        <begin position="91"/>
        <end position="95"/>
    </location>
    <ligand>
        <name>GTP</name>
        <dbReference type="ChEBI" id="CHEBI:37565"/>
    </ligand>
</feature>
<feature type="binding site" evidence="1">
    <location>
        <begin position="153"/>
        <end position="156"/>
    </location>
    <ligand>
        <name>GTP</name>
        <dbReference type="ChEBI" id="CHEBI:37565"/>
    </ligand>
</feature>
<feature type="modified residue" description="5-glutamyl glycerylphosphorylethanolamine" evidence="1">
    <location>
        <position position="301"/>
    </location>
</feature>
<feature type="modified residue" description="5-glutamyl glycerylphosphorylethanolamine" evidence="1">
    <location>
        <position position="374"/>
    </location>
</feature>
<organism>
    <name type="scientific">Bombyx mori</name>
    <name type="common">Silk moth</name>
    <dbReference type="NCBI Taxonomy" id="7091"/>
    <lineage>
        <taxon>Eukaryota</taxon>
        <taxon>Metazoa</taxon>
        <taxon>Ecdysozoa</taxon>
        <taxon>Arthropoda</taxon>
        <taxon>Hexapoda</taxon>
        <taxon>Insecta</taxon>
        <taxon>Pterygota</taxon>
        <taxon>Neoptera</taxon>
        <taxon>Endopterygota</taxon>
        <taxon>Lepidoptera</taxon>
        <taxon>Glossata</taxon>
        <taxon>Ditrysia</taxon>
        <taxon>Bombycoidea</taxon>
        <taxon>Bombycidae</taxon>
        <taxon>Bombycinae</taxon>
        <taxon>Bombyx</taxon>
    </lineage>
</organism>